<protein>
    <recommendedName>
        <fullName evidence="1">FMN-dependent NADH:quinone oxidoreductase</fullName>
        <ecNumber evidence="1">1.6.5.-</ecNumber>
    </recommendedName>
    <alternativeName>
        <fullName evidence="1">Azo-dye reductase</fullName>
    </alternativeName>
    <alternativeName>
        <fullName evidence="1">FMN-dependent NADH-azo compound oxidoreductase</fullName>
    </alternativeName>
    <alternativeName>
        <fullName evidence="1">FMN-dependent NADH-azoreductase</fullName>
        <ecNumber evidence="1">1.7.1.17</ecNumber>
    </alternativeName>
</protein>
<reference key="1">
    <citation type="journal article" date="2007" name="PLoS Genet.">
        <title>A tale of two oxidation states: bacterial colonization of arsenic-rich environments.</title>
        <authorList>
            <person name="Muller D."/>
            <person name="Medigue C."/>
            <person name="Koechler S."/>
            <person name="Barbe V."/>
            <person name="Barakat M."/>
            <person name="Talla E."/>
            <person name="Bonnefoy V."/>
            <person name="Krin E."/>
            <person name="Arsene-Ploetze F."/>
            <person name="Carapito C."/>
            <person name="Chandler M."/>
            <person name="Cournoyer B."/>
            <person name="Cruveiller S."/>
            <person name="Dossat C."/>
            <person name="Duval S."/>
            <person name="Heymann M."/>
            <person name="Leize E."/>
            <person name="Lieutaud A."/>
            <person name="Lievremont D."/>
            <person name="Makita Y."/>
            <person name="Mangenot S."/>
            <person name="Nitschke W."/>
            <person name="Ortet P."/>
            <person name="Perdrial N."/>
            <person name="Schoepp B."/>
            <person name="Siguier P."/>
            <person name="Simeonova D.D."/>
            <person name="Rouy Z."/>
            <person name="Segurens B."/>
            <person name="Turlin E."/>
            <person name="Vallenet D."/>
            <person name="van Dorsselaer A."/>
            <person name="Weiss S."/>
            <person name="Weissenbach J."/>
            <person name="Lett M.-C."/>
            <person name="Danchin A."/>
            <person name="Bertin P.N."/>
        </authorList>
    </citation>
    <scope>NUCLEOTIDE SEQUENCE [LARGE SCALE GENOMIC DNA]</scope>
    <source>
        <strain>ULPAs1</strain>
    </source>
</reference>
<organism>
    <name type="scientific">Herminiimonas arsenicoxydans</name>
    <dbReference type="NCBI Taxonomy" id="204773"/>
    <lineage>
        <taxon>Bacteria</taxon>
        <taxon>Pseudomonadati</taxon>
        <taxon>Pseudomonadota</taxon>
        <taxon>Betaproteobacteria</taxon>
        <taxon>Burkholderiales</taxon>
        <taxon>Oxalobacteraceae</taxon>
        <taxon>Herminiimonas</taxon>
    </lineage>
</organism>
<name>AZOR_HERAR</name>
<feature type="chain" id="PRO_1000066513" description="FMN-dependent NADH:quinone oxidoreductase">
    <location>
        <begin position="1"/>
        <end position="204"/>
    </location>
</feature>
<feature type="binding site" evidence="1">
    <location>
        <position position="10"/>
    </location>
    <ligand>
        <name>FMN</name>
        <dbReference type="ChEBI" id="CHEBI:58210"/>
    </ligand>
</feature>
<feature type="binding site" evidence="1">
    <location>
        <begin position="16"/>
        <end position="18"/>
    </location>
    <ligand>
        <name>FMN</name>
        <dbReference type="ChEBI" id="CHEBI:58210"/>
    </ligand>
</feature>
<feature type="binding site" evidence="1">
    <location>
        <begin position="96"/>
        <end position="99"/>
    </location>
    <ligand>
        <name>FMN</name>
        <dbReference type="ChEBI" id="CHEBI:58210"/>
    </ligand>
</feature>
<evidence type="ECO:0000255" key="1">
    <source>
        <dbReference type="HAMAP-Rule" id="MF_01216"/>
    </source>
</evidence>
<comment type="function">
    <text evidence="1">Quinone reductase that provides resistance to thiol-specific stress caused by electrophilic quinones.</text>
</comment>
<comment type="function">
    <text evidence="1">Also exhibits azoreductase activity. Catalyzes the reductive cleavage of the azo bond in aromatic azo compounds to the corresponding amines.</text>
</comment>
<comment type="catalytic activity">
    <reaction evidence="1">
        <text>2 a quinone + NADH + H(+) = 2 a 1,4-benzosemiquinone + NAD(+)</text>
        <dbReference type="Rhea" id="RHEA:65952"/>
        <dbReference type="ChEBI" id="CHEBI:15378"/>
        <dbReference type="ChEBI" id="CHEBI:57540"/>
        <dbReference type="ChEBI" id="CHEBI:57945"/>
        <dbReference type="ChEBI" id="CHEBI:132124"/>
        <dbReference type="ChEBI" id="CHEBI:134225"/>
    </reaction>
</comment>
<comment type="catalytic activity">
    <reaction evidence="1">
        <text>N,N-dimethyl-1,4-phenylenediamine + anthranilate + 2 NAD(+) = 2-(4-dimethylaminophenyl)diazenylbenzoate + 2 NADH + 2 H(+)</text>
        <dbReference type="Rhea" id="RHEA:55872"/>
        <dbReference type="ChEBI" id="CHEBI:15378"/>
        <dbReference type="ChEBI" id="CHEBI:15783"/>
        <dbReference type="ChEBI" id="CHEBI:16567"/>
        <dbReference type="ChEBI" id="CHEBI:57540"/>
        <dbReference type="ChEBI" id="CHEBI:57945"/>
        <dbReference type="ChEBI" id="CHEBI:71579"/>
        <dbReference type="EC" id="1.7.1.17"/>
    </reaction>
</comment>
<comment type="cofactor">
    <cofactor evidence="1">
        <name>FMN</name>
        <dbReference type="ChEBI" id="CHEBI:58210"/>
    </cofactor>
    <text evidence="1">Binds 1 FMN per subunit.</text>
</comment>
<comment type="subunit">
    <text evidence="1">Homodimer.</text>
</comment>
<comment type="similarity">
    <text evidence="1">Belongs to the azoreductase type 1 family.</text>
</comment>
<gene>
    <name evidence="1" type="primary">azoR</name>
    <name type="ordered locus">HEAR0564</name>
</gene>
<keyword id="KW-0285">Flavoprotein</keyword>
<keyword id="KW-0288">FMN</keyword>
<keyword id="KW-0520">NAD</keyword>
<keyword id="KW-0560">Oxidoreductase</keyword>
<keyword id="KW-1185">Reference proteome</keyword>
<accession>A4G2N3</accession>
<dbReference type="EC" id="1.6.5.-" evidence="1"/>
<dbReference type="EC" id="1.7.1.17" evidence="1"/>
<dbReference type="EMBL" id="CU207211">
    <property type="protein sequence ID" value="CAL60770.1"/>
    <property type="molecule type" value="Genomic_DNA"/>
</dbReference>
<dbReference type="SMR" id="A4G2N3"/>
<dbReference type="STRING" id="204773.HEAR0564"/>
<dbReference type="KEGG" id="har:HEAR0564"/>
<dbReference type="eggNOG" id="COG1182">
    <property type="taxonomic scope" value="Bacteria"/>
</dbReference>
<dbReference type="HOGENOM" id="CLU_088964_0_0_4"/>
<dbReference type="OrthoDB" id="9787136at2"/>
<dbReference type="Proteomes" id="UP000006697">
    <property type="component" value="Chromosome"/>
</dbReference>
<dbReference type="GO" id="GO:0009055">
    <property type="term" value="F:electron transfer activity"/>
    <property type="evidence" value="ECO:0007669"/>
    <property type="project" value="UniProtKB-UniRule"/>
</dbReference>
<dbReference type="GO" id="GO:0010181">
    <property type="term" value="F:FMN binding"/>
    <property type="evidence" value="ECO:0007669"/>
    <property type="project" value="UniProtKB-UniRule"/>
</dbReference>
<dbReference type="GO" id="GO:0016652">
    <property type="term" value="F:oxidoreductase activity, acting on NAD(P)H as acceptor"/>
    <property type="evidence" value="ECO:0007669"/>
    <property type="project" value="UniProtKB-UniRule"/>
</dbReference>
<dbReference type="GO" id="GO:0016655">
    <property type="term" value="F:oxidoreductase activity, acting on NAD(P)H, quinone or similar compound as acceptor"/>
    <property type="evidence" value="ECO:0007669"/>
    <property type="project" value="InterPro"/>
</dbReference>
<dbReference type="Gene3D" id="3.40.50.360">
    <property type="match status" value="1"/>
</dbReference>
<dbReference type="HAMAP" id="MF_01216">
    <property type="entry name" value="Azoreductase_type1"/>
    <property type="match status" value="1"/>
</dbReference>
<dbReference type="InterPro" id="IPR003680">
    <property type="entry name" value="Flavodoxin_fold"/>
</dbReference>
<dbReference type="InterPro" id="IPR029039">
    <property type="entry name" value="Flavoprotein-like_sf"/>
</dbReference>
<dbReference type="InterPro" id="IPR050104">
    <property type="entry name" value="FMN-dep_NADH:Q_OxRdtase_AzoR1"/>
</dbReference>
<dbReference type="InterPro" id="IPR023048">
    <property type="entry name" value="NADH:quinone_OxRdtase_FMN_depd"/>
</dbReference>
<dbReference type="PANTHER" id="PTHR43741">
    <property type="entry name" value="FMN-DEPENDENT NADH-AZOREDUCTASE 1"/>
    <property type="match status" value="1"/>
</dbReference>
<dbReference type="PANTHER" id="PTHR43741:SF2">
    <property type="entry name" value="FMN-DEPENDENT NADH:QUINONE OXIDOREDUCTASE"/>
    <property type="match status" value="1"/>
</dbReference>
<dbReference type="Pfam" id="PF02525">
    <property type="entry name" value="Flavodoxin_2"/>
    <property type="match status" value="1"/>
</dbReference>
<dbReference type="SUPFAM" id="SSF52218">
    <property type="entry name" value="Flavoproteins"/>
    <property type="match status" value="1"/>
</dbReference>
<proteinExistence type="inferred from homology"/>
<sequence length="204" mass="21896">MTKILNINSSVRIGDSISRKVTTEFINKWKAREADAIVVERDLAAQPLPHIDGSTLGAFFTPAEQRTPEQAQIATLSETLVRELFDADVIVIGAPMYNFSITSGLKAWIDHVARAGVTFKYTDKGPVGLLTGKKVYIFTASGGVYSEGPAQAMDFNATYLRTVLGFIGLTDVTIINSEGVAMGAEGVNKALAKTSNTINELLPA</sequence>